<reference key="1">
    <citation type="journal article" date="2011" name="PLoS Genet.">
        <title>Genomic analysis of the necrotrophic fungal pathogens Sclerotinia sclerotiorum and Botrytis cinerea.</title>
        <authorList>
            <person name="Amselem J."/>
            <person name="Cuomo C.A."/>
            <person name="van Kan J.A.L."/>
            <person name="Viaud M."/>
            <person name="Benito E.P."/>
            <person name="Couloux A."/>
            <person name="Coutinho P.M."/>
            <person name="de Vries R.P."/>
            <person name="Dyer P.S."/>
            <person name="Fillinger S."/>
            <person name="Fournier E."/>
            <person name="Gout L."/>
            <person name="Hahn M."/>
            <person name="Kohn L."/>
            <person name="Lapalu N."/>
            <person name="Plummer K.M."/>
            <person name="Pradier J.-M."/>
            <person name="Quevillon E."/>
            <person name="Sharon A."/>
            <person name="Simon A."/>
            <person name="ten Have A."/>
            <person name="Tudzynski B."/>
            <person name="Tudzynski P."/>
            <person name="Wincker P."/>
            <person name="Andrew M."/>
            <person name="Anthouard V."/>
            <person name="Beever R.E."/>
            <person name="Beffa R."/>
            <person name="Benoit I."/>
            <person name="Bouzid O."/>
            <person name="Brault B."/>
            <person name="Chen Z."/>
            <person name="Choquer M."/>
            <person name="Collemare J."/>
            <person name="Cotton P."/>
            <person name="Danchin E.G."/>
            <person name="Da Silva C."/>
            <person name="Gautier A."/>
            <person name="Giraud C."/>
            <person name="Giraud T."/>
            <person name="Gonzalez C."/>
            <person name="Grossetete S."/>
            <person name="Gueldener U."/>
            <person name="Henrissat B."/>
            <person name="Howlett B.J."/>
            <person name="Kodira C."/>
            <person name="Kretschmer M."/>
            <person name="Lappartient A."/>
            <person name="Leroch M."/>
            <person name="Levis C."/>
            <person name="Mauceli E."/>
            <person name="Neuveglise C."/>
            <person name="Oeser B."/>
            <person name="Pearson M."/>
            <person name="Poulain J."/>
            <person name="Poussereau N."/>
            <person name="Quesneville H."/>
            <person name="Rascle C."/>
            <person name="Schumacher J."/>
            <person name="Segurens B."/>
            <person name="Sexton A."/>
            <person name="Silva E."/>
            <person name="Sirven C."/>
            <person name="Soanes D.M."/>
            <person name="Talbot N.J."/>
            <person name="Templeton M."/>
            <person name="Yandava C."/>
            <person name="Yarden O."/>
            <person name="Zeng Q."/>
            <person name="Rollins J.A."/>
            <person name="Lebrun M.-H."/>
            <person name="Dickman M."/>
        </authorList>
    </citation>
    <scope>NUCLEOTIDE SEQUENCE [LARGE SCALE GENOMIC DNA]</scope>
    <source>
        <strain>B05.10</strain>
    </source>
</reference>
<reference key="2">
    <citation type="journal article" date="2012" name="Eukaryot. Cell">
        <title>Genome update of Botrytis cinerea strains B05.10 and T4.</title>
        <authorList>
            <person name="Staats M."/>
            <person name="van Kan J.A.L."/>
        </authorList>
    </citation>
    <scope>NUCLEOTIDE SEQUENCE [LARGE SCALE GENOMIC DNA]</scope>
    <scope>GENOME REANNOTATION</scope>
    <source>
        <strain>B05.10</strain>
    </source>
</reference>
<reference key="3">
    <citation type="journal article" date="2017" name="Mol. Plant Pathol.">
        <title>A gapless genome sequence of the fungus Botrytis cinerea.</title>
        <authorList>
            <person name="van Kan J.A.L."/>
            <person name="Stassen J.H.M."/>
            <person name="Mosbach A."/>
            <person name="van der Lee T.A.J."/>
            <person name="Faino L."/>
            <person name="Farmer A.D."/>
            <person name="Papasotiriou D.G."/>
            <person name="Zhou S."/>
            <person name="Seidl M.F."/>
            <person name="Cottam E."/>
            <person name="Edel D."/>
            <person name="Hahn M."/>
            <person name="Schwartz D.C."/>
            <person name="Dietrich R.A."/>
            <person name="Widdison S."/>
            <person name="Scalliet G."/>
        </authorList>
    </citation>
    <scope>NUCLEOTIDE SEQUENCE [LARGE SCALE GENOMIC DNA]</scope>
    <scope>GENOME REANNOTATION</scope>
    <source>
        <strain>B05.10</strain>
    </source>
</reference>
<accession>A6SL61</accession>
<accession>A0A384K449</accession>
<name>TPC1_BOTFB</name>
<evidence type="ECO:0000250" key="1"/>
<evidence type="ECO:0000255" key="2"/>
<evidence type="ECO:0000305" key="3"/>
<proteinExistence type="inferred from homology"/>
<protein>
    <recommendedName>
        <fullName>Mitochondrial thiamine pyrophosphate carrier 1</fullName>
    </recommendedName>
</protein>
<comment type="function">
    <text evidence="1">Mitochondrial transporter that mediates uptake of thiamine pyrophosphate (ThPP) into mitochondria.</text>
</comment>
<comment type="subcellular location">
    <subcellularLocation>
        <location evidence="1">Mitochondrion inner membrane</location>
        <topology evidence="1">Multi-pass membrane protein</topology>
    </subcellularLocation>
</comment>
<comment type="similarity">
    <text evidence="3">Belongs to the mitochondrial carrier (TC 2.A.29) family.</text>
</comment>
<sequence>MSESAEHLKDEGSKTQSMIAGATAGLIARFVIAPLDVVKIRLQLQSHSASDPLSQRDLRGSPIYKGTIPTIKRIFREEGLAALWKGNVPAELMYVSYSAIQFTTYRSVTLGLQDAFGEHRLPAAAESFIAGASAGAVATTATYPLDLLRTRFAAQGIERVYTSLRSSIRDIAISEGPRGFFQGLGAGVGQIVPYMGIFFATYESLRLPMGTLNMPFGSADASAGVIASVIAKTGIFPFDLIRKRLQVQGPTRERYVHKNIPVYNGVFQTMRHILHNEGYRGLYRGLTVSLFKSAPASAVTMWTYERVLGILLKWEKSQELSK</sequence>
<organism>
    <name type="scientific">Botryotinia fuckeliana (strain B05.10)</name>
    <name type="common">Noble rot fungus</name>
    <name type="synonym">Botrytis cinerea</name>
    <dbReference type="NCBI Taxonomy" id="332648"/>
    <lineage>
        <taxon>Eukaryota</taxon>
        <taxon>Fungi</taxon>
        <taxon>Dikarya</taxon>
        <taxon>Ascomycota</taxon>
        <taxon>Pezizomycotina</taxon>
        <taxon>Leotiomycetes</taxon>
        <taxon>Helotiales</taxon>
        <taxon>Sclerotiniaceae</taxon>
        <taxon>Botrytis</taxon>
    </lineage>
</organism>
<dbReference type="EMBL" id="CP009819">
    <property type="protein sequence ID" value="ATZ57605.1"/>
    <property type="molecule type" value="Genomic_DNA"/>
</dbReference>
<dbReference type="SMR" id="A6SL61"/>
<dbReference type="EnsemblFungi" id="Bcin15g01660.1">
    <property type="protein sequence ID" value="Bcin15p01660.1"/>
    <property type="gene ID" value="Bcin15g01660"/>
</dbReference>
<dbReference type="GeneID" id="5428435"/>
<dbReference type="KEGG" id="bfu:BCIN_15g01660"/>
<dbReference type="VEuPathDB" id="FungiDB:Bcin15g01660"/>
<dbReference type="OMA" id="MYVCYGA"/>
<dbReference type="OrthoDB" id="18574at2759"/>
<dbReference type="Proteomes" id="UP000001798">
    <property type="component" value="Chromosome bcin15"/>
</dbReference>
<dbReference type="GO" id="GO:0005743">
    <property type="term" value="C:mitochondrial inner membrane"/>
    <property type="evidence" value="ECO:0007669"/>
    <property type="project" value="UniProtKB-SubCell"/>
</dbReference>
<dbReference type="GO" id="GO:0055085">
    <property type="term" value="P:transmembrane transport"/>
    <property type="evidence" value="ECO:0007669"/>
    <property type="project" value="InterPro"/>
</dbReference>
<dbReference type="FunFam" id="1.50.40.10:FF:000011">
    <property type="entry name" value="Mitochondrial thiamine pyrophosphate carrier 1"/>
    <property type="match status" value="1"/>
</dbReference>
<dbReference type="Gene3D" id="1.50.40.10">
    <property type="entry name" value="Mitochondrial carrier domain"/>
    <property type="match status" value="1"/>
</dbReference>
<dbReference type="InterPro" id="IPR002067">
    <property type="entry name" value="Mit_carrier"/>
</dbReference>
<dbReference type="InterPro" id="IPR018108">
    <property type="entry name" value="Mitochondrial_sb/sol_carrier"/>
</dbReference>
<dbReference type="InterPro" id="IPR023395">
    <property type="entry name" value="Mt_carrier_dom_sf"/>
</dbReference>
<dbReference type="PANTHER" id="PTHR24089">
    <property type="entry name" value="SOLUTE CARRIER FAMILY 25"/>
    <property type="match status" value="1"/>
</dbReference>
<dbReference type="Pfam" id="PF00153">
    <property type="entry name" value="Mito_carr"/>
    <property type="match status" value="3"/>
</dbReference>
<dbReference type="PRINTS" id="PR00926">
    <property type="entry name" value="MITOCARRIER"/>
</dbReference>
<dbReference type="SUPFAM" id="SSF103506">
    <property type="entry name" value="Mitochondrial carrier"/>
    <property type="match status" value="1"/>
</dbReference>
<dbReference type="PROSITE" id="PS50920">
    <property type="entry name" value="SOLCAR"/>
    <property type="match status" value="3"/>
</dbReference>
<feature type="chain" id="PRO_0000320459" description="Mitochondrial thiamine pyrophosphate carrier 1">
    <location>
        <begin position="1"/>
        <end position="322"/>
    </location>
</feature>
<feature type="transmembrane region" description="Helical; Name=1" evidence="2">
    <location>
        <begin position="18"/>
        <end position="38"/>
    </location>
</feature>
<feature type="transmembrane region" description="Helical; Name=2" evidence="2">
    <location>
        <begin position="92"/>
        <end position="108"/>
    </location>
</feature>
<feature type="transmembrane region" description="Helical; Name=3" evidence="2">
    <location>
        <begin position="128"/>
        <end position="148"/>
    </location>
</feature>
<feature type="transmembrane region" description="Helical; Name=4" evidence="2">
    <location>
        <begin position="180"/>
        <end position="200"/>
    </location>
</feature>
<feature type="transmembrane region" description="Helical; Name=5" evidence="2">
    <location>
        <begin position="221"/>
        <end position="241"/>
    </location>
</feature>
<feature type="transmembrane region" description="Helical; Name=6" evidence="2">
    <location>
        <begin position="285"/>
        <end position="302"/>
    </location>
</feature>
<feature type="repeat" description="Solcar 1">
    <location>
        <begin position="12"/>
        <end position="111"/>
    </location>
</feature>
<feature type="repeat" description="Solcar 2">
    <location>
        <begin position="122"/>
        <end position="208"/>
    </location>
</feature>
<feature type="repeat" description="Solcar 3">
    <location>
        <begin position="215"/>
        <end position="310"/>
    </location>
</feature>
<gene>
    <name type="primary">tpc1</name>
    <name type="ORF">BC1G_13653</name>
    <name type="ORF">BCIN_15g01660</name>
</gene>
<keyword id="KW-0472">Membrane</keyword>
<keyword id="KW-0496">Mitochondrion</keyword>
<keyword id="KW-0999">Mitochondrion inner membrane</keyword>
<keyword id="KW-1185">Reference proteome</keyword>
<keyword id="KW-0677">Repeat</keyword>
<keyword id="KW-0812">Transmembrane</keyword>
<keyword id="KW-1133">Transmembrane helix</keyword>
<keyword id="KW-0813">Transport</keyword>